<organism>
    <name type="scientific">Dehalococcoides mccartyi (strain CBDB1)</name>
    <dbReference type="NCBI Taxonomy" id="255470"/>
    <lineage>
        <taxon>Bacteria</taxon>
        <taxon>Bacillati</taxon>
        <taxon>Chloroflexota</taxon>
        <taxon>Dehalococcoidia</taxon>
        <taxon>Dehalococcoidales</taxon>
        <taxon>Dehalococcoidaceae</taxon>
        <taxon>Dehalococcoides</taxon>
    </lineage>
</organism>
<comment type="function">
    <text evidence="1">An aminoacyl-tRNA editing enzyme that deacylates mischarged D-aminoacyl-tRNAs. Also deacylates mischarged glycyl-tRNA(Ala), protecting cells against glycine mischarging by AlaRS. Acts via tRNA-based rather than protein-based catalysis; rejects L-amino acids rather than detecting D-amino acids in the active site. By recycling D-aminoacyl-tRNA to D-amino acids and free tRNA molecules, this enzyme counteracts the toxicity associated with the formation of D-aminoacyl-tRNA entities in vivo and helps enforce protein L-homochirality.</text>
</comment>
<comment type="catalytic activity">
    <reaction evidence="1">
        <text>glycyl-tRNA(Ala) + H2O = tRNA(Ala) + glycine + H(+)</text>
        <dbReference type="Rhea" id="RHEA:53744"/>
        <dbReference type="Rhea" id="RHEA-COMP:9657"/>
        <dbReference type="Rhea" id="RHEA-COMP:13640"/>
        <dbReference type="ChEBI" id="CHEBI:15377"/>
        <dbReference type="ChEBI" id="CHEBI:15378"/>
        <dbReference type="ChEBI" id="CHEBI:57305"/>
        <dbReference type="ChEBI" id="CHEBI:78442"/>
        <dbReference type="ChEBI" id="CHEBI:78522"/>
        <dbReference type="EC" id="3.1.1.96"/>
    </reaction>
</comment>
<comment type="catalytic activity">
    <reaction evidence="1">
        <text>a D-aminoacyl-tRNA + H2O = a tRNA + a D-alpha-amino acid + H(+)</text>
        <dbReference type="Rhea" id="RHEA:13953"/>
        <dbReference type="Rhea" id="RHEA-COMP:10123"/>
        <dbReference type="Rhea" id="RHEA-COMP:10124"/>
        <dbReference type="ChEBI" id="CHEBI:15377"/>
        <dbReference type="ChEBI" id="CHEBI:15378"/>
        <dbReference type="ChEBI" id="CHEBI:59871"/>
        <dbReference type="ChEBI" id="CHEBI:78442"/>
        <dbReference type="ChEBI" id="CHEBI:79333"/>
        <dbReference type="EC" id="3.1.1.96"/>
    </reaction>
</comment>
<comment type="subunit">
    <text evidence="1">Homodimer.</text>
</comment>
<comment type="subcellular location">
    <subcellularLocation>
        <location evidence="1">Cytoplasm</location>
    </subcellularLocation>
</comment>
<comment type="domain">
    <text evidence="1">A Gly-cisPro motif from one monomer fits into the active site of the other monomer to allow specific chiral rejection of L-amino acids.</text>
</comment>
<comment type="similarity">
    <text evidence="1">Belongs to the DTD family.</text>
</comment>
<protein>
    <recommendedName>
        <fullName evidence="1">D-aminoacyl-tRNA deacylase</fullName>
        <shortName evidence="1">DTD</shortName>
        <ecNumber evidence="1">3.1.1.96</ecNumber>
    </recommendedName>
    <alternativeName>
        <fullName evidence="1">Gly-tRNA(Ala) deacylase</fullName>
    </alternativeName>
</protein>
<keyword id="KW-0963">Cytoplasm</keyword>
<keyword id="KW-0378">Hydrolase</keyword>
<keyword id="KW-0694">RNA-binding</keyword>
<keyword id="KW-0820">tRNA-binding</keyword>
<evidence type="ECO:0000255" key="1">
    <source>
        <dbReference type="HAMAP-Rule" id="MF_00518"/>
    </source>
</evidence>
<reference key="1">
    <citation type="journal article" date="2005" name="Nat. Biotechnol.">
        <title>Genome sequence of the chlorinated compound-respiring bacterium Dehalococcoides species strain CBDB1.</title>
        <authorList>
            <person name="Kube M."/>
            <person name="Beck A."/>
            <person name="Zinder S.H."/>
            <person name="Kuhl H."/>
            <person name="Reinhardt R."/>
            <person name="Adrian L."/>
        </authorList>
    </citation>
    <scope>NUCLEOTIDE SEQUENCE [LARGE SCALE GENOMIC DNA]</scope>
    <source>
        <strain>CBDB1</strain>
    </source>
</reference>
<name>DTD_DEHMC</name>
<gene>
    <name evidence="1" type="primary">dtd</name>
    <name type="ordered locus">cbdbA23</name>
</gene>
<proteinExistence type="inferred from homology"/>
<feature type="chain" id="PRO_0000259278" description="D-aminoacyl-tRNA deacylase">
    <location>
        <begin position="1"/>
        <end position="153"/>
    </location>
</feature>
<feature type="short sequence motif" description="Gly-cisPro motif, important for rejection of L-amino acids" evidence="1">
    <location>
        <begin position="137"/>
        <end position="138"/>
    </location>
</feature>
<sequence length="153" mass="16851">MKAVVQRVSRASVRVSGETVGEIGPGLAVLLGVAEGDTEEDAEYLASKIINLRIFSDAEGKFNLSLKDLCREMLVVSQFTLIADTRKGRRPSFIEAAQPQEADGLYNVFIRLCREEGTQVATGQFGAMMMLEIYNDGPVTIILDSRDRLNPRL</sequence>
<dbReference type="EC" id="3.1.1.96" evidence="1"/>
<dbReference type="EMBL" id="AJ965256">
    <property type="protein sequence ID" value="CAI82297.1"/>
    <property type="molecule type" value="Genomic_DNA"/>
</dbReference>
<dbReference type="RefSeq" id="WP_011308656.1">
    <property type="nucleotide sequence ID" value="NC_007356.1"/>
</dbReference>
<dbReference type="SMR" id="Q3ZWA4"/>
<dbReference type="KEGG" id="deh:cbdbA23"/>
<dbReference type="HOGENOM" id="CLU_076901_1_0_0"/>
<dbReference type="Proteomes" id="UP000000433">
    <property type="component" value="Chromosome"/>
</dbReference>
<dbReference type="GO" id="GO:0005737">
    <property type="term" value="C:cytoplasm"/>
    <property type="evidence" value="ECO:0007669"/>
    <property type="project" value="UniProtKB-SubCell"/>
</dbReference>
<dbReference type="GO" id="GO:0051500">
    <property type="term" value="F:D-tyrosyl-tRNA(Tyr) deacylase activity"/>
    <property type="evidence" value="ECO:0007669"/>
    <property type="project" value="TreeGrafter"/>
</dbReference>
<dbReference type="GO" id="GO:0106026">
    <property type="term" value="F:Gly-tRNA(Ala) deacylase activity"/>
    <property type="evidence" value="ECO:0007669"/>
    <property type="project" value="UniProtKB-UniRule"/>
</dbReference>
<dbReference type="GO" id="GO:0043908">
    <property type="term" value="F:Ser(Gly)-tRNA(Ala) hydrolase activity"/>
    <property type="evidence" value="ECO:0007669"/>
    <property type="project" value="UniProtKB-UniRule"/>
</dbReference>
<dbReference type="GO" id="GO:0000049">
    <property type="term" value="F:tRNA binding"/>
    <property type="evidence" value="ECO:0007669"/>
    <property type="project" value="UniProtKB-UniRule"/>
</dbReference>
<dbReference type="GO" id="GO:0019478">
    <property type="term" value="P:D-amino acid catabolic process"/>
    <property type="evidence" value="ECO:0007669"/>
    <property type="project" value="UniProtKB-UniRule"/>
</dbReference>
<dbReference type="CDD" id="cd00563">
    <property type="entry name" value="Dtyr_deacylase"/>
    <property type="match status" value="1"/>
</dbReference>
<dbReference type="FunFam" id="3.50.80.10:FF:000001">
    <property type="entry name" value="D-aminoacyl-tRNA deacylase"/>
    <property type="match status" value="1"/>
</dbReference>
<dbReference type="Gene3D" id="3.50.80.10">
    <property type="entry name" value="D-tyrosyl-tRNA(Tyr) deacylase"/>
    <property type="match status" value="1"/>
</dbReference>
<dbReference type="HAMAP" id="MF_00518">
    <property type="entry name" value="Deacylase_Dtd"/>
    <property type="match status" value="1"/>
</dbReference>
<dbReference type="InterPro" id="IPR003732">
    <property type="entry name" value="Daa-tRNA_deacyls_DTD"/>
</dbReference>
<dbReference type="InterPro" id="IPR023509">
    <property type="entry name" value="DTD-like_sf"/>
</dbReference>
<dbReference type="NCBIfam" id="TIGR00256">
    <property type="entry name" value="D-aminoacyl-tRNA deacylase"/>
    <property type="match status" value="1"/>
</dbReference>
<dbReference type="PANTHER" id="PTHR10472:SF5">
    <property type="entry name" value="D-AMINOACYL-TRNA DEACYLASE 1"/>
    <property type="match status" value="1"/>
</dbReference>
<dbReference type="PANTHER" id="PTHR10472">
    <property type="entry name" value="D-TYROSYL-TRNA TYR DEACYLASE"/>
    <property type="match status" value="1"/>
</dbReference>
<dbReference type="Pfam" id="PF02580">
    <property type="entry name" value="Tyr_Deacylase"/>
    <property type="match status" value="1"/>
</dbReference>
<dbReference type="SUPFAM" id="SSF69500">
    <property type="entry name" value="DTD-like"/>
    <property type="match status" value="1"/>
</dbReference>
<accession>Q3ZWA4</accession>